<accession>F7VJQ1</accession>
<evidence type="ECO:0000255" key="1"/>
<evidence type="ECO:0000269" key="2">
    <source>
    </source>
</evidence>
<evidence type="ECO:0000305" key="3">
    <source>
    </source>
</evidence>
<comment type="subcellular location">
    <subcellularLocation>
        <location evidence="2">Mitochondrion outer membrane</location>
        <topology evidence="2">Single-pass membrane protein</topology>
    </subcellularLocation>
</comment>
<comment type="alternative products">
    <event type="alternative initiation"/>
    <isoform>
        <id>F7VJQ1-1</id>
        <name>3</name>
        <name>AltPrP</name>
        <sequence type="displayed"/>
    </isoform>
    <isoform>
        <id>P04156-1</id>
        <name>1</name>
        <name>PrP</name>
        <sequence type="external"/>
    </isoform>
</comment>
<comment type="tissue specificity">
    <text evidence="2">Detected in brain homogenate, primary neurons, and peripheral blood mononuclear cells (at protein level).</text>
</comment>
<comment type="induction">
    <text evidence="2">Up-regulated by endoplasmic reticulum stress and proteasomal inhibition.</text>
</comment>
<comment type="miscellaneous">
    <text evidence="3">This protein is produced by a bicistronic gene which also produces the major prion protein/PRNP from an overlapping reading frame.</text>
</comment>
<comment type="miscellaneous">
    <text evidence="3">The alternative prion protein/AltPrP and PRNP (AC P04156) have no apparent direct functional relation since a mutation that removes the start codon of the AltPrP has no apparent effect on the biology of PRNP. In mouse and hamster, the alternative initiation AUG codon is absent and is replaced by a GUG codon (PubMed:21478263).</text>
</comment>
<reference key="1">
    <citation type="journal article" date="2001" name="Nature">
        <title>The DNA sequence and comparative analysis of human chromosome 20.</title>
        <authorList>
            <person name="Deloukas P."/>
            <person name="Matthews L.H."/>
            <person name="Ashurst J.L."/>
            <person name="Burton J."/>
            <person name="Gilbert J.G.R."/>
            <person name="Jones M."/>
            <person name="Stavrides G."/>
            <person name="Almeida J.P."/>
            <person name="Babbage A.K."/>
            <person name="Bagguley C.L."/>
            <person name="Bailey J."/>
            <person name="Barlow K.F."/>
            <person name="Bates K.N."/>
            <person name="Beard L.M."/>
            <person name="Beare D.M."/>
            <person name="Beasley O.P."/>
            <person name="Bird C.P."/>
            <person name="Blakey S.E."/>
            <person name="Bridgeman A.M."/>
            <person name="Brown A.J."/>
            <person name="Buck D."/>
            <person name="Burrill W.D."/>
            <person name="Butler A.P."/>
            <person name="Carder C."/>
            <person name="Carter N.P."/>
            <person name="Chapman J.C."/>
            <person name="Clamp M."/>
            <person name="Clark G."/>
            <person name="Clark L.N."/>
            <person name="Clark S.Y."/>
            <person name="Clee C.M."/>
            <person name="Clegg S."/>
            <person name="Cobley V.E."/>
            <person name="Collier R.E."/>
            <person name="Connor R.E."/>
            <person name="Corby N.R."/>
            <person name="Coulson A."/>
            <person name="Coville G.J."/>
            <person name="Deadman R."/>
            <person name="Dhami P.D."/>
            <person name="Dunn M."/>
            <person name="Ellington A.G."/>
            <person name="Frankland J.A."/>
            <person name="Fraser A."/>
            <person name="French L."/>
            <person name="Garner P."/>
            <person name="Grafham D.V."/>
            <person name="Griffiths C."/>
            <person name="Griffiths M.N.D."/>
            <person name="Gwilliam R."/>
            <person name="Hall R.E."/>
            <person name="Hammond S."/>
            <person name="Harley J.L."/>
            <person name="Heath P.D."/>
            <person name="Ho S."/>
            <person name="Holden J.L."/>
            <person name="Howden P.J."/>
            <person name="Huckle E."/>
            <person name="Hunt A.R."/>
            <person name="Hunt S.E."/>
            <person name="Jekosch K."/>
            <person name="Johnson C.M."/>
            <person name="Johnson D."/>
            <person name="Kay M.P."/>
            <person name="Kimberley A.M."/>
            <person name="King A."/>
            <person name="Knights A."/>
            <person name="Laird G.K."/>
            <person name="Lawlor S."/>
            <person name="Lehvaeslaiho M.H."/>
            <person name="Leversha M.A."/>
            <person name="Lloyd C."/>
            <person name="Lloyd D.M."/>
            <person name="Lovell J.D."/>
            <person name="Marsh V.L."/>
            <person name="Martin S.L."/>
            <person name="McConnachie L.J."/>
            <person name="McLay K."/>
            <person name="McMurray A.A."/>
            <person name="Milne S.A."/>
            <person name="Mistry D."/>
            <person name="Moore M.J.F."/>
            <person name="Mullikin J.C."/>
            <person name="Nickerson T."/>
            <person name="Oliver K."/>
            <person name="Parker A."/>
            <person name="Patel R."/>
            <person name="Pearce T.A.V."/>
            <person name="Peck A.I."/>
            <person name="Phillimore B.J.C.T."/>
            <person name="Prathalingam S.R."/>
            <person name="Plumb R.W."/>
            <person name="Ramsay H."/>
            <person name="Rice C.M."/>
            <person name="Ross M.T."/>
            <person name="Scott C.E."/>
            <person name="Sehra H.K."/>
            <person name="Shownkeen R."/>
            <person name="Sims S."/>
            <person name="Skuce C.D."/>
            <person name="Smith M.L."/>
            <person name="Soderlund C."/>
            <person name="Steward C.A."/>
            <person name="Sulston J.E."/>
            <person name="Swann R.M."/>
            <person name="Sycamore N."/>
            <person name="Taylor R."/>
            <person name="Tee L."/>
            <person name="Thomas D.W."/>
            <person name="Thorpe A."/>
            <person name="Tracey A."/>
            <person name="Tromans A.C."/>
            <person name="Vaudin M."/>
            <person name="Wall M."/>
            <person name="Wallis J.M."/>
            <person name="Whitehead S.L."/>
            <person name="Whittaker P."/>
            <person name="Willey D.L."/>
            <person name="Williams L."/>
            <person name="Williams S.A."/>
            <person name="Wilming L."/>
            <person name="Wray P.W."/>
            <person name="Hubbard T."/>
            <person name="Durbin R.M."/>
            <person name="Bentley D.R."/>
            <person name="Beck S."/>
            <person name="Rogers J."/>
        </authorList>
    </citation>
    <scope>NUCLEOTIDE SEQUENCE [LARGE SCALE GENOMIC DNA]</scope>
</reference>
<reference key="2">
    <citation type="journal article" date="2011" name="FASEB J.">
        <title>An overlapping reading frame in the PRNP gene encodes a novel polypeptide distinct from the prion protein.</title>
        <authorList>
            <person name="Vanderperre B."/>
            <person name="Staskevicius A.B."/>
            <person name="Tremblay G."/>
            <person name="McCoy M."/>
            <person name="O'Neill M.A."/>
            <person name="Cashman N.R."/>
            <person name="Roucou X."/>
        </authorList>
    </citation>
    <scope>IDENTIFICATION</scope>
    <scope>SUBCELLULAR LOCATION</scope>
    <scope>INDUCTION</scope>
    <scope>TISSUE SPECIFICITY</scope>
</reference>
<proteinExistence type="evidence at protein level"/>
<keyword id="KW-0024">Alternative initiation</keyword>
<keyword id="KW-0472">Membrane</keyword>
<keyword id="KW-0496">Mitochondrion</keyword>
<keyword id="KW-1000">Mitochondrion outer membrane</keyword>
<keyword id="KW-1185">Reference proteome</keyword>
<keyword id="KW-0812">Transmembrane</keyword>
<keyword id="KW-1133">Transmembrane helix</keyword>
<gene>
    <name type="primary">PRNP</name>
    <name type="synonym">ALTPRP</name>
    <name type="synonym">PRIP</name>
    <name type="synonym">PRP</name>
</gene>
<protein>
    <recommendedName>
        <fullName>Alternative prion protein</fullName>
    </recommendedName>
    <alternativeName>
        <fullName>AltPrP</fullName>
    </alternativeName>
</protein>
<sequence>MEHWGQPIPGAGQPWRQPLPTSGRWWLGAASWWWLGAASWWWLGAAPWWWLGTASWWWLGSRRWHPQSVEQAE</sequence>
<feature type="chain" id="PRO_0000420424" description="Alternative prion protein">
    <location>
        <begin position="1"/>
        <end position="73"/>
    </location>
</feature>
<feature type="transmembrane region" description="Helical" evidence="1">
    <location>
        <begin position="32"/>
        <end position="52"/>
    </location>
</feature>
<organism>
    <name type="scientific">Homo sapiens</name>
    <name type="common">Human</name>
    <dbReference type="NCBI Taxonomy" id="9606"/>
    <lineage>
        <taxon>Eukaryota</taxon>
        <taxon>Metazoa</taxon>
        <taxon>Chordata</taxon>
        <taxon>Craniata</taxon>
        <taxon>Vertebrata</taxon>
        <taxon>Euteleostomi</taxon>
        <taxon>Mammalia</taxon>
        <taxon>Eutheria</taxon>
        <taxon>Euarchontoglires</taxon>
        <taxon>Primates</taxon>
        <taxon>Haplorrhini</taxon>
        <taxon>Catarrhini</taxon>
        <taxon>Hominidae</taxon>
        <taxon>Homo</taxon>
    </lineage>
</organism>
<name>APRIO_HUMAN</name>
<dbReference type="EMBL" id="AL133396">
    <property type="status" value="NOT_ANNOTATED_CDS"/>
    <property type="molecule type" value="Genomic_DNA"/>
</dbReference>
<dbReference type="EMBL" id="BK007887">
    <property type="protein sequence ID" value="DAA34790.1"/>
    <property type="molecule type" value="Genomic_DNA"/>
</dbReference>
<dbReference type="RefSeq" id="NP_001258490.1">
    <molecule id="F7VJQ1-1"/>
    <property type="nucleotide sequence ID" value="NM_001271561.3"/>
</dbReference>
<dbReference type="BioGRID" id="111606">
    <property type="interactions" value="1116"/>
</dbReference>
<dbReference type="DrugBank" id="DB09130">
    <property type="generic name" value="Copper"/>
</dbReference>
<dbReference type="SwissPalm" id="F7VJQ1"/>
<dbReference type="BioMuta" id="PRNP"/>
<dbReference type="DNASU" id="5621"/>
<dbReference type="GeneID" id="5621"/>
<dbReference type="AGR" id="HGNC:9449"/>
<dbReference type="CTD" id="5621"/>
<dbReference type="DisGeNET" id="5621"/>
<dbReference type="GeneCards" id="PRNP"/>
<dbReference type="GeneReviews" id="PRNP"/>
<dbReference type="HGNC" id="HGNC:9449">
    <property type="gene designation" value="PRNP"/>
</dbReference>
<dbReference type="MalaCards" id="PRNP"/>
<dbReference type="neXtProt" id="NX_F7VJQ1"/>
<dbReference type="OrthoDB" id="9048788at2759"/>
<dbReference type="PathwayCommons" id="F7VJQ1"/>
<dbReference type="SignaLink" id="F7VJQ1"/>
<dbReference type="SIGNOR" id="F7VJQ1"/>
<dbReference type="BioGRID-ORCS" id="5621">
    <property type="hits" value="10 hits in 1169 CRISPR screens"/>
</dbReference>
<dbReference type="ChiTaRS" id="PRNP">
    <property type="organism name" value="human"/>
</dbReference>
<dbReference type="GeneWiki" id="PRNP"/>
<dbReference type="GenomeRNAi" id="5621"/>
<dbReference type="Pharos" id="F7VJQ1">
    <property type="development level" value="Tbio"/>
</dbReference>
<dbReference type="Proteomes" id="UP000005640">
    <property type="component" value="Unplaced"/>
</dbReference>
<dbReference type="GO" id="GO:0005741">
    <property type="term" value="C:mitochondrial outer membrane"/>
    <property type="evidence" value="ECO:0000314"/>
    <property type="project" value="UniProtKB"/>
</dbReference>